<name>RPIA_METPB</name>
<comment type="function">
    <text evidence="1">Catalyzes the reversible conversion of ribose-5-phosphate to ribulose 5-phosphate.</text>
</comment>
<comment type="catalytic activity">
    <reaction evidence="1">
        <text>aldehydo-D-ribose 5-phosphate = D-ribulose 5-phosphate</text>
        <dbReference type="Rhea" id="RHEA:14657"/>
        <dbReference type="ChEBI" id="CHEBI:58121"/>
        <dbReference type="ChEBI" id="CHEBI:58273"/>
        <dbReference type="EC" id="5.3.1.6"/>
    </reaction>
</comment>
<comment type="pathway">
    <text evidence="1">Carbohydrate degradation; pentose phosphate pathway; D-ribose 5-phosphate from D-ribulose 5-phosphate (non-oxidative stage): step 1/1.</text>
</comment>
<comment type="subunit">
    <text evidence="1">Homodimer.</text>
</comment>
<comment type="similarity">
    <text evidence="1">Belongs to the ribose 5-phosphate isomerase family.</text>
</comment>
<gene>
    <name evidence="1" type="primary">rpiA</name>
    <name type="ordered locus">Mpop_2254</name>
</gene>
<feature type="chain" id="PRO_1000097676" description="Ribose-5-phosphate isomerase A">
    <location>
        <begin position="1"/>
        <end position="236"/>
    </location>
</feature>
<feature type="active site" description="Proton acceptor" evidence="1">
    <location>
        <position position="105"/>
    </location>
</feature>
<feature type="binding site" evidence="1">
    <location>
        <begin position="28"/>
        <end position="31"/>
    </location>
    <ligand>
        <name>substrate</name>
    </ligand>
</feature>
<feature type="binding site" evidence="1">
    <location>
        <begin position="83"/>
        <end position="86"/>
    </location>
    <ligand>
        <name>substrate</name>
    </ligand>
</feature>
<feature type="binding site" evidence="1">
    <location>
        <begin position="96"/>
        <end position="99"/>
    </location>
    <ligand>
        <name>substrate</name>
    </ligand>
</feature>
<feature type="binding site" evidence="1">
    <location>
        <position position="123"/>
    </location>
    <ligand>
        <name>substrate</name>
    </ligand>
</feature>
<sequence length="236" mass="24213">MSAPDLKRAAAERAIPLVEDGMRLGIGTGSTAAAFIALLGERVRAGLTVTGVPTSEATRIACEREGIPLATLEELPELDLTIDGADEVDGNLRLIKGGGAALLREKIVAAASRRMVVIADASKRVETLGAFPLPVEVNLFGIGATTRAVEAAVAAAGCIGEIVRRLDKAGQPVLTDGGHALLDLRLGRIPDPEALSARLWAVPGVVEHGLFLGIADAAILAAAEGDQAVVSVLGRL</sequence>
<reference key="1">
    <citation type="submission" date="2008-04" db="EMBL/GenBank/DDBJ databases">
        <title>Complete sequence of chromosome of Methylobacterium populi BJ001.</title>
        <authorList>
            <consortium name="US DOE Joint Genome Institute"/>
            <person name="Copeland A."/>
            <person name="Lucas S."/>
            <person name="Lapidus A."/>
            <person name="Glavina del Rio T."/>
            <person name="Dalin E."/>
            <person name="Tice H."/>
            <person name="Bruce D."/>
            <person name="Goodwin L."/>
            <person name="Pitluck S."/>
            <person name="Chertkov O."/>
            <person name="Brettin T."/>
            <person name="Detter J.C."/>
            <person name="Han C."/>
            <person name="Kuske C.R."/>
            <person name="Schmutz J."/>
            <person name="Larimer F."/>
            <person name="Land M."/>
            <person name="Hauser L."/>
            <person name="Kyrpides N."/>
            <person name="Mikhailova N."/>
            <person name="Marx C."/>
            <person name="Richardson P."/>
        </authorList>
    </citation>
    <scope>NUCLEOTIDE SEQUENCE [LARGE SCALE GENOMIC DNA]</scope>
    <source>
        <strain>ATCC BAA-705 / NCIMB 13946 / BJ001</strain>
    </source>
</reference>
<evidence type="ECO:0000255" key="1">
    <source>
        <dbReference type="HAMAP-Rule" id="MF_00170"/>
    </source>
</evidence>
<accession>B1Z896</accession>
<organism>
    <name type="scientific">Methylorubrum populi (strain ATCC BAA-705 / NCIMB 13946 / BJ001)</name>
    <name type="common">Methylobacterium populi</name>
    <dbReference type="NCBI Taxonomy" id="441620"/>
    <lineage>
        <taxon>Bacteria</taxon>
        <taxon>Pseudomonadati</taxon>
        <taxon>Pseudomonadota</taxon>
        <taxon>Alphaproteobacteria</taxon>
        <taxon>Hyphomicrobiales</taxon>
        <taxon>Methylobacteriaceae</taxon>
        <taxon>Methylorubrum</taxon>
    </lineage>
</organism>
<keyword id="KW-0413">Isomerase</keyword>
<proteinExistence type="inferred from homology"/>
<protein>
    <recommendedName>
        <fullName evidence="1">Ribose-5-phosphate isomerase A</fullName>
        <ecNumber evidence="1">5.3.1.6</ecNumber>
    </recommendedName>
    <alternativeName>
        <fullName evidence="1">Phosphoriboisomerase A</fullName>
        <shortName evidence="1">PRI</shortName>
    </alternativeName>
</protein>
<dbReference type="EC" id="5.3.1.6" evidence="1"/>
<dbReference type="EMBL" id="CP001029">
    <property type="protein sequence ID" value="ACB80416.1"/>
    <property type="molecule type" value="Genomic_DNA"/>
</dbReference>
<dbReference type="RefSeq" id="WP_012454150.1">
    <property type="nucleotide sequence ID" value="NC_010725.1"/>
</dbReference>
<dbReference type="SMR" id="B1Z896"/>
<dbReference type="STRING" id="441620.Mpop_2254"/>
<dbReference type="KEGG" id="mpo:Mpop_2254"/>
<dbReference type="eggNOG" id="COG0120">
    <property type="taxonomic scope" value="Bacteria"/>
</dbReference>
<dbReference type="HOGENOM" id="CLU_056590_1_0_5"/>
<dbReference type="OrthoDB" id="5870696at2"/>
<dbReference type="UniPathway" id="UPA00115">
    <property type="reaction ID" value="UER00412"/>
</dbReference>
<dbReference type="Proteomes" id="UP000007136">
    <property type="component" value="Chromosome"/>
</dbReference>
<dbReference type="GO" id="GO:0004751">
    <property type="term" value="F:ribose-5-phosphate isomerase activity"/>
    <property type="evidence" value="ECO:0007669"/>
    <property type="project" value="UniProtKB-UniRule"/>
</dbReference>
<dbReference type="GO" id="GO:0009052">
    <property type="term" value="P:pentose-phosphate shunt, non-oxidative branch"/>
    <property type="evidence" value="ECO:0007669"/>
    <property type="project" value="UniProtKB-UniRule"/>
</dbReference>
<dbReference type="CDD" id="cd01398">
    <property type="entry name" value="RPI_A"/>
    <property type="match status" value="1"/>
</dbReference>
<dbReference type="FunFam" id="3.40.50.1360:FF:000001">
    <property type="entry name" value="Ribose-5-phosphate isomerase A"/>
    <property type="match status" value="1"/>
</dbReference>
<dbReference type="Gene3D" id="3.30.70.260">
    <property type="match status" value="1"/>
</dbReference>
<dbReference type="Gene3D" id="3.40.50.1360">
    <property type="match status" value="1"/>
</dbReference>
<dbReference type="HAMAP" id="MF_00170">
    <property type="entry name" value="Rib_5P_isom_A"/>
    <property type="match status" value="1"/>
</dbReference>
<dbReference type="InterPro" id="IPR037171">
    <property type="entry name" value="NagB/RpiA_transferase-like"/>
</dbReference>
<dbReference type="InterPro" id="IPR050262">
    <property type="entry name" value="Ribose-5P_isomerase"/>
</dbReference>
<dbReference type="InterPro" id="IPR020672">
    <property type="entry name" value="Ribose5P_isomerase_typA_subgr"/>
</dbReference>
<dbReference type="InterPro" id="IPR004788">
    <property type="entry name" value="Ribose5P_isomerase_type_A"/>
</dbReference>
<dbReference type="NCBIfam" id="NF001924">
    <property type="entry name" value="PRK00702.1"/>
    <property type="match status" value="1"/>
</dbReference>
<dbReference type="NCBIfam" id="TIGR00021">
    <property type="entry name" value="rpiA"/>
    <property type="match status" value="1"/>
</dbReference>
<dbReference type="PANTHER" id="PTHR43748">
    <property type="entry name" value="RIBOSE-5-PHOSPHATE ISOMERASE 3, CHLOROPLASTIC-RELATED"/>
    <property type="match status" value="1"/>
</dbReference>
<dbReference type="PANTHER" id="PTHR43748:SF3">
    <property type="entry name" value="RIBOSE-5-PHOSPHATE ISOMERASE 3, CHLOROPLASTIC-RELATED"/>
    <property type="match status" value="1"/>
</dbReference>
<dbReference type="Pfam" id="PF06026">
    <property type="entry name" value="Rib_5-P_isom_A"/>
    <property type="match status" value="1"/>
</dbReference>
<dbReference type="SUPFAM" id="SSF75445">
    <property type="entry name" value="D-ribose-5-phosphate isomerase (RpiA), lid domain"/>
    <property type="match status" value="1"/>
</dbReference>
<dbReference type="SUPFAM" id="SSF100950">
    <property type="entry name" value="NagB/RpiA/CoA transferase-like"/>
    <property type="match status" value="1"/>
</dbReference>